<comment type="function">
    <text evidence="2">Binds to platelet GPIb (subunit alpha) (GP1BA) and functions as a receptor blocker for vWF binding to GPIb. The platelet GPIb-binding site resides on the GPIB-BP subunit beta and not on the alpha subunit. At a final concentration of 104 nM totally abolishes vWF-dependent shear-induced platelet aggregation (SIPA) at a high shear stress, but had no effect on SIPA at a low shear stress.</text>
</comment>
<comment type="subunit">
    <text evidence="2">Heterodimer of subunits alpha and beta; disulfide-linked.</text>
</comment>
<comment type="subcellular location">
    <subcellularLocation>
        <location>Secreted</location>
    </subcellularLocation>
</comment>
<comment type="tissue specificity">
    <text>Expressed by the venom gland.</text>
</comment>
<comment type="similarity">
    <text evidence="3">Belongs to the snaclec family.</text>
</comment>
<sequence length="123" mass="14298">DCPSDWSPYGGHCYKLFKQRMNWADAENLCAQQRKESHLVSFHSSEEVDFLVLLTFPILGPDLYWTGLSNIWNGCSFEWSDGTKVNYNAWASESECVASKTTDNQWWSFPCTRLQYFVCEFQA</sequence>
<reference key="1">
    <citation type="journal article" date="1996" name="J. Biol. Chem.">
        <title>Complete amino acid sequence and identification of the platelet glycoprotein Ib-binding site of jararaca GPIb-BP, a snake venom protein isolated from Bothrops jararaca.</title>
        <authorList>
            <person name="Kawasaki T."/>
            <person name="Fujimura Y."/>
            <person name="Usami Y."/>
            <person name="Suzuki M."/>
            <person name="Miura S."/>
            <person name="Sakurai Y."/>
            <person name="Makita K."/>
            <person name="Taniuchi Y."/>
            <person name="Hirano K."/>
            <person name="Titani K."/>
        </authorList>
    </citation>
    <scope>PROTEIN SEQUENCE</scope>
    <scope>GPIB-BINDING SITE</scope>
    <source>
        <tissue>Venom</tissue>
    </source>
</reference>
<reference key="2">
    <citation type="journal article" date="1995" name="Thromb. Haemost.">
        <title>Isolation and characterization of jararaca GPIb-BP, a snake venom antagonist specific to platelet glycoprotein Ib.</title>
        <authorList>
            <person name="Fujimura Y."/>
            <person name="Ikeda Y."/>
            <person name="Miura S."/>
            <person name="Yoshida E."/>
            <person name="Shima H."/>
            <person name="Nishida S."/>
            <person name="Suzuki M."/>
            <person name="Titani K."/>
            <person name="Taniuchi Y."/>
            <person name="Kawasaki T."/>
        </authorList>
    </citation>
    <scope>PROTEIN SEQUENCE OF 1-33</scope>
    <scope>FUNCTION</scope>
    <scope>SUBUNIT</scope>
    <source>
        <tissue>Venom</tissue>
    </source>
</reference>
<proteinExistence type="evidence at protein level"/>
<keyword id="KW-0903">Direct protein sequencing</keyword>
<keyword id="KW-1015">Disulfide bond</keyword>
<keyword id="KW-1199">Hemostasis impairing toxin</keyword>
<keyword id="KW-1201">Platelet aggregation inhibiting toxin</keyword>
<keyword id="KW-0964">Secreted</keyword>
<keyword id="KW-0800">Toxin</keyword>
<name>SL1B_BOTJA</name>
<organism>
    <name type="scientific">Bothrops jararaca</name>
    <name type="common">Jararaca</name>
    <name type="synonym">Bothrops jajaraca</name>
    <dbReference type="NCBI Taxonomy" id="8724"/>
    <lineage>
        <taxon>Eukaryota</taxon>
        <taxon>Metazoa</taxon>
        <taxon>Chordata</taxon>
        <taxon>Craniata</taxon>
        <taxon>Vertebrata</taxon>
        <taxon>Euteleostomi</taxon>
        <taxon>Lepidosauria</taxon>
        <taxon>Squamata</taxon>
        <taxon>Bifurcata</taxon>
        <taxon>Unidentata</taxon>
        <taxon>Episquamata</taxon>
        <taxon>Toxicofera</taxon>
        <taxon>Serpentes</taxon>
        <taxon>Colubroidea</taxon>
        <taxon>Viperidae</taxon>
        <taxon>Crotalinae</taxon>
        <taxon>Bothrops</taxon>
    </lineage>
</organism>
<evidence type="ECO:0000255" key="1">
    <source>
        <dbReference type="PROSITE-ProRule" id="PRU00040"/>
    </source>
</evidence>
<evidence type="ECO:0000269" key="2">
    <source>
    </source>
</evidence>
<evidence type="ECO:0000305" key="3"/>
<dbReference type="SMR" id="Q9PSM5"/>
<dbReference type="GO" id="GO:0005576">
    <property type="term" value="C:extracellular region"/>
    <property type="evidence" value="ECO:0007669"/>
    <property type="project" value="UniProtKB-SubCell"/>
</dbReference>
<dbReference type="GO" id="GO:0090729">
    <property type="term" value="F:toxin activity"/>
    <property type="evidence" value="ECO:0007669"/>
    <property type="project" value="UniProtKB-KW"/>
</dbReference>
<dbReference type="FunFam" id="3.10.100.10:FF:000087">
    <property type="entry name" value="Snaclec rhodocetin subunit delta"/>
    <property type="match status" value="1"/>
</dbReference>
<dbReference type="Gene3D" id="3.10.100.10">
    <property type="entry name" value="Mannose-Binding Protein A, subunit A"/>
    <property type="match status" value="1"/>
</dbReference>
<dbReference type="InterPro" id="IPR001304">
    <property type="entry name" value="C-type_lectin-like"/>
</dbReference>
<dbReference type="InterPro" id="IPR016186">
    <property type="entry name" value="C-type_lectin-like/link_sf"/>
</dbReference>
<dbReference type="InterPro" id="IPR050111">
    <property type="entry name" value="C-type_lectin/snaclec_domain"/>
</dbReference>
<dbReference type="InterPro" id="IPR018378">
    <property type="entry name" value="C-type_lectin_CS"/>
</dbReference>
<dbReference type="InterPro" id="IPR016187">
    <property type="entry name" value="CTDL_fold"/>
</dbReference>
<dbReference type="PANTHER" id="PTHR22803">
    <property type="entry name" value="MANNOSE, PHOSPHOLIPASE, LECTIN RECEPTOR RELATED"/>
    <property type="match status" value="1"/>
</dbReference>
<dbReference type="Pfam" id="PF00059">
    <property type="entry name" value="Lectin_C"/>
    <property type="match status" value="1"/>
</dbReference>
<dbReference type="SMART" id="SM00034">
    <property type="entry name" value="CLECT"/>
    <property type="match status" value="1"/>
</dbReference>
<dbReference type="SUPFAM" id="SSF56436">
    <property type="entry name" value="C-type lectin-like"/>
    <property type="match status" value="1"/>
</dbReference>
<dbReference type="PROSITE" id="PS00615">
    <property type="entry name" value="C_TYPE_LECTIN_1"/>
    <property type="match status" value="1"/>
</dbReference>
<dbReference type="PROSITE" id="PS50041">
    <property type="entry name" value="C_TYPE_LECTIN_2"/>
    <property type="match status" value="1"/>
</dbReference>
<feature type="chain" id="PRO_0000355255" description="Snaclec GPIB-binding protein subunit beta">
    <location>
        <begin position="1"/>
        <end position="123"/>
    </location>
</feature>
<feature type="domain" description="C-type lectin" evidence="1">
    <location>
        <begin position="9"/>
        <end position="120"/>
    </location>
</feature>
<feature type="disulfide bond" evidence="1">
    <location>
        <begin position="2"/>
        <end position="13"/>
    </location>
</feature>
<feature type="disulfide bond" evidence="1">
    <location>
        <begin position="30"/>
        <end position="119"/>
    </location>
</feature>
<feature type="disulfide bond" description="Interchain (with C-88 in subunit alpha)" evidence="1">
    <location>
        <position position="75"/>
    </location>
</feature>
<feature type="disulfide bond" evidence="1">
    <location>
        <begin position="96"/>
        <end position="111"/>
    </location>
</feature>
<accession>Q9PSM5</accession>
<accession>Q9PRQ7</accession>
<protein>
    <recommendedName>
        <fullName>Snaclec GPIB-binding protein subunit beta</fullName>
        <shortName>GPIb-BP subunit beta</shortName>
    </recommendedName>
</protein>